<dbReference type="EMBL" id="AM398681">
    <property type="protein sequence ID" value="CAL43234.1"/>
    <property type="molecule type" value="Genomic_DNA"/>
</dbReference>
<dbReference type="RefSeq" id="WP_011963285.1">
    <property type="nucleotide sequence ID" value="NC_009613.3"/>
</dbReference>
<dbReference type="RefSeq" id="YP_001296045.1">
    <property type="nucleotide sequence ID" value="NC_009613.3"/>
</dbReference>
<dbReference type="SMR" id="A6GYR1"/>
<dbReference type="STRING" id="402612.FP1147"/>
<dbReference type="EnsemblBacteria" id="CAL43234">
    <property type="protein sequence ID" value="CAL43234"/>
    <property type="gene ID" value="FP1147"/>
</dbReference>
<dbReference type="KEGG" id="fps:FP1147"/>
<dbReference type="PATRIC" id="fig|402612.5.peg.1160"/>
<dbReference type="eggNOG" id="COG0323">
    <property type="taxonomic scope" value="Bacteria"/>
</dbReference>
<dbReference type="HOGENOM" id="CLU_004131_4_0_10"/>
<dbReference type="OrthoDB" id="9763467at2"/>
<dbReference type="Proteomes" id="UP000006394">
    <property type="component" value="Chromosome"/>
</dbReference>
<dbReference type="GO" id="GO:0032300">
    <property type="term" value="C:mismatch repair complex"/>
    <property type="evidence" value="ECO:0007669"/>
    <property type="project" value="InterPro"/>
</dbReference>
<dbReference type="GO" id="GO:0005524">
    <property type="term" value="F:ATP binding"/>
    <property type="evidence" value="ECO:0007669"/>
    <property type="project" value="InterPro"/>
</dbReference>
<dbReference type="GO" id="GO:0016887">
    <property type="term" value="F:ATP hydrolysis activity"/>
    <property type="evidence" value="ECO:0007669"/>
    <property type="project" value="InterPro"/>
</dbReference>
<dbReference type="GO" id="GO:0140664">
    <property type="term" value="F:ATP-dependent DNA damage sensor activity"/>
    <property type="evidence" value="ECO:0007669"/>
    <property type="project" value="InterPro"/>
</dbReference>
<dbReference type="GO" id="GO:0030983">
    <property type="term" value="F:mismatched DNA binding"/>
    <property type="evidence" value="ECO:0007669"/>
    <property type="project" value="InterPro"/>
</dbReference>
<dbReference type="GO" id="GO:0006298">
    <property type="term" value="P:mismatch repair"/>
    <property type="evidence" value="ECO:0007669"/>
    <property type="project" value="UniProtKB-UniRule"/>
</dbReference>
<dbReference type="CDD" id="cd16926">
    <property type="entry name" value="HATPase_MutL-MLH-PMS-like"/>
    <property type="match status" value="1"/>
</dbReference>
<dbReference type="CDD" id="cd00782">
    <property type="entry name" value="MutL_Trans"/>
    <property type="match status" value="1"/>
</dbReference>
<dbReference type="FunFam" id="3.30.565.10:FF:000003">
    <property type="entry name" value="DNA mismatch repair endonuclease MutL"/>
    <property type="match status" value="1"/>
</dbReference>
<dbReference type="Gene3D" id="3.30.230.10">
    <property type="match status" value="1"/>
</dbReference>
<dbReference type="Gene3D" id="3.30.565.10">
    <property type="entry name" value="Histidine kinase-like ATPase, C-terminal domain"/>
    <property type="match status" value="1"/>
</dbReference>
<dbReference type="Gene3D" id="3.30.1540.20">
    <property type="entry name" value="MutL, C-terminal domain, dimerisation subdomain"/>
    <property type="match status" value="1"/>
</dbReference>
<dbReference type="Gene3D" id="3.30.1370.100">
    <property type="entry name" value="MutL, C-terminal domain, regulatory subdomain"/>
    <property type="match status" value="1"/>
</dbReference>
<dbReference type="HAMAP" id="MF_00149">
    <property type="entry name" value="DNA_mis_repair"/>
    <property type="match status" value="1"/>
</dbReference>
<dbReference type="InterPro" id="IPR014762">
    <property type="entry name" value="DNA_mismatch_repair_CS"/>
</dbReference>
<dbReference type="InterPro" id="IPR020667">
    <property type="entry name" value="DNA_mismatch_repair_MutL"/>
</dbReference>
<dbReference type="InterPro" id="IPR013507">
    <property type="entry name" value="DNA_mismatch_S5_2-like"/>
</dbReference>
<dbReference type="InterPro" id="IPR036890">
    <property type="entry name" value="HATPase_C_sf"/>
</dbReference>
<dbReference type="InterPro" id="IPR002099">
    <property type="entry name" value="MutL/Mlh/PMS"/>
</dbReference>
<dbReference type="InterPro" id="IPR038973">
    <property type="entry name" value="MutL/Mlh/Pms-like"/>
</dbReference>
<dbReference type="InterPro" id="IPR014790">
    <property type="entry name" value="MutL_C"/>
</dbReference>
<dbReference type="InterPro" id="IPR042120">
    <property type="entry name" value="MutL_C_dimsub"/>
</dbReference>
<dbReference type="InterPro" id="IPR042121">
    <property type="entry name" value="MutL_C_regsub"/>
</dbReference>
<dbReference type="InterPro" id="IPR037198">
    <property type="entry name" value="MutL_C_sf"/>
</dbReference>
<dbReference type="InterPro" id="IPR020568">
    <property type="entry name" value="Ribosomal_Su5_D2-typ_SF"/>
</dbReference>
<dbReference type="InterPro" id="IPR014721">
    <property type="entry name" value="Ribsml_uS5_D2-typ_fold_subgr"/>
</dbReference>
<dbReference type="NCBIfam" id="TIGR00585">
    <property type="entry name" value="mutl"/>
    <property type="match status" value="1"/>
</dbReference>
<dbReference type="PANTHER" id="PTHR10073">
    <property type="entry name" value="DNA MISMATCH REPAIR PROTEIN MLH, PMS, MUTL"/>
    <property type="match status" value="1"/>
</dbReference>
<dbReference type="PANTHER" id="PTHR10073:SF12">
    <property type="entry name" value="DNA MISMATCH REPAIR PROTEIN MLH1"/>
    <property type="match status" value="1"/>
</dbReference>
<dbReference type="Pfam" id="PF01119">
    <property type="entry name" value="DNA_mis_repair"/>
    <property type="match status" value="1"/>
</dbReference>
<dbReference type="Pfam" id="PF13589">
    <property type="entry name" value="HATPase_c_3"/>
    <property type="match status" value="1"/>
</dbReference>
<dbReference type="Pfam" id="PF08676">
    <property type="entry name" value="MutL_C"/>
    <property type="match status" value="1"/>
</dbReference>
<dbReference type="SMART" id="SM01340">
    <property type="entry name" value="DNA_mis_repair"/>
    <property type="match status" value="1"/>
</dbReference>
<dbReference type="SMART" id="SM00853">
    <property type="entry name" value="MutL_C"/>
    <property type="match status" value="1"/>
</dbReference>
<dbReference type="SUPFAM" id="SSF55874">
    <property type="entry name" value="ATPase domain of HSP90 chaperone/DNA topoisomerase II/histidine kinase"/>
    <property type="match status" value="1"/>
</dbReference>
<dbReference type="SUPFAM" id="SSF118116">
    <property type="entry name" value="DNA mismatch repair protein MutL"/>
    <property type="match status" value="1"/>
</dbReference>
<dbReference type="SUPFAM" id="SSF54211">
    <property type="entry name" value="Ribosomal protein S5 domain 2-like"/>
    <property type="match status" value="1"/>
</dbReference>
<dbReference type="PROSITE" id="PS00058">
    <property type="entry name" value="DNA_MISMATCH_REPAIR_1"/>
    <property type="match status" value="1"/>
</dbReference>
<keyword id="KW-0227">DNA damage</keyword>
<keyword id="KW-0234">DNA repair</keyword>
<keyword id="KW-1185">Reference proteome</keyword>
<evidence type="ECO:0000255" key="1">
    <source>
        <dbReference type="HAMAP-Rule" id="MF_00149"/>
    </source>
</evidence>
<accession>A6GYR1</accession>
<organism>
    <name type="scientific">Flavobacterium psychrophilum (strain ATCC 49511 / DSM 21280 / CIP 103535 / JIP02/86)</name>
    <dbReference type="NCBI Taxonomy" id="402612"/>
    <lineage>
        <taxon>Bacteria</taxon>
        <taxon>Pseudomonadati</taxon>
        <taxon>Bacteroidota</taxon>
        <taxon>Flavobacteriia</taxon>
        <taxon>Flavobacteriales</taxon>
        <taxon>Flavobacteriaceae</taxon>
        <taxon>Flavobacterium</taxon>
    </lineage>
</organism>
<reference key="1">
    <citation type="journal article" date="2007" name="Nat. Biotechnol.">
        <title>Complete genome sequence of the fish pathogen Flavobacterium psychrophilum.</title>
        <authorList>
            <person name="Duchaud E."/>
            <person name="Boussaha M."/>
            <person name="Loux V."/>
            <person name="Bernardet J.-F."/>
            <person name="Michel C."/>
            <person name="Kerouault B."/>
            <person name="Mondot S."/>
            <person name="Nicolas P."/>
            <person name="Bossy R."/>
            <person name="Caron C."/>
            <person name="Bessieres P."/>
            <person name="Gibrat J.-F."/>
            <person name="Claverol S."/>
            <person name="Dumetz F."/>
            <person name="Le Henaff M."/>
            <person name="Benmansour A."/>
        </authorList>
    </citation>
    <scope>NUCLEOTIDE SEQUENCE [LARGE SCALE GENOMIC DNA]</scope>
    <source>
        <strain>ATCC 49511 / DSM 21280 / CIP 103535 / JIP02/86</strain>
    </source>
</reference>
<sequence>MSSIIQLLPDHVANQIAAGEVVQRPASVVKELLENAIDAGASDIKLICKEAGKVLIQVIDNGKGMSVTDARLCFERHATSKIRQAEDLFDLHTKGFRGEALASIAAIAHVEMKTKQDQEELGTHIIIEGSKFVSQDVAVLPKGTSFLVKNLFFNIPARRNFLKSDIVELRHIIDEFQRVALAHHNIHFTFYHNGSELFNLPQSNVRQRIVNIFSGKTNEKLVPIQENTDILSIQGFIGKPEFAKKSKGEQFFFVNDRFIKSGYLHHAIMNAYEGLLRDGAQPSYFLYLDVPPHTIDINIHPTKTEIKFDDEQALYAILRSATKHSLGQFNVAPVLDFERDFNLDTPYSYQNKEAETPTIQVDSNFNPFQEEKKQSNFSYKPKTEKQPHWESLYVGLDTKSIDLDEMSFESETVTSSLFSDSEVEKAPTTTYQIHKKYIVNPIKSGMLIIDQQRAHQRILYEQFLTNITIHQANSQQLLFPVTLYFSGNEMALIQEIKQSLESTGFVFEALNKDSIVISGLPVTVSESEASIVLEQLVSDLQQEVPDSSFSQMDSMAKSMAKSLAVKTGTYLTEEAQVNLVNNLFACKEATVSPFNKTTFITLSVEDLDKKFSI</sequence>
<feature type="chain" id="PRO_1000058143" description="DNA mismatch repair protein MutL">
    <location>
        <begin position="1"/>
        <end position="613"/>
    </location>
</feature>
<name>MUTL_FLAPJ</name>
<protein>
    <recommendedName>
        <fullName evidence="1">DNA mismatch repair protein MutL</fullName>
    </recommendedName>
</protein>
<comment type="function">
    <text evidence="1">This protein is involved in the repair of mismatches in DNA. It is required for dam-dependent methyl-directed DNA mismatch repair. May act as a 'molecular matchmaker', a protein that promotes the formation of a stable complex between two or more DNA-binding proteins in an ATP-dependent manner without itself being part of a final effector complex.</text>
</comment>
<comment type="similarity">
    <text evidence="1">Belongs to the DNA mismatch repair MutL/HexB family.</text>
</comment>
<gene>
    <name evidence="1" type="primary">mutL</name>
    <name type="ordered locus">FP1147</name>
</gene>
<proteinExistence type="inferred from homology"/>